<feature type="chain" id="PRO_0000174007" description="Small ribosomal subunit protein eS30">
    <location>
        <begin position="1"/>
        <end position="58"/>
    </location>
</feature>
<feature type="region of interest" description="Disordered" evidence="1">
    <location>
        <begin position="1"/>
        <end position="58"/>
    </location>
</feature>
<feature type="compositionally biased region" description="Basic residues" evidence="1">
    <location>
        <begin position="25"/>
        <end position="40"/>
    </location>
</feature>
<feature type="turn" evidence="13">
    <location>
        <begin position="9"/>
        <end position="12"/>
    </location>
</feature>
<feature type="helix" evidence="13">
    <location>
        <begin position="13"/>
        <end position="17"/>
    </location>
</feature>
<feature type="helix" evidence="13">
    <location>
        <begin position="33"/>
        <end position="43"/>
    </location>
</feature>
<proteinExistence type="evidence at protein level"/>
<reference key="1">
    <citation type="journal article" date="1998" name="Science">
        <title>Chromosome 2 sequence of the human malaria parasite Plasmodium falciparum.</title>
        <authorList>
            <person name="Gardner M.J."/>
            <person name="Tettelin H."/>
            <person name="Carucci D.J."/>
            <person name="Cummings L.M."/>
            <person name="Aravind L."/>
            <person name="Koonin E.V."/>
            <person name="Shallom S.J."/>
            <person name="Mason T."/>
            <person name="Yu K."/>
            <person name="Fujii C."/>
            <person name="Pederson J."/>
            <person name="Shen K."/>
            <person name="Jing J."/>
            <person name="Aston C."/>
            <person name="Lai Z."/>
            <person name="Schwartz D.C."/>
            <person name="Pertea M."/>
            <person name="Salzberg S.L."/>
            <person name="Zhou L."/>
            <person name="Sutton G.G."/>
            <person name="Clayton R."/>
            <person name="White O."/>
            <person name="Smith H.O."/>
            <person name="Fraser C.M."/>
            <person name="Adams M.D."/>
            <person name="Venter J.C."/>
            <person name="Hoffman S.L."/>
        </authorList>
    </citation>
    <scope>NUCLEOTIDE SEQUENCE [LARGE SCALE GENOMIC DNA]</scope>
    <source>
        <strain>3D7</strain>
    </source>
</reference>
<reference key="2">
    <citation type="journal article" date="2002" name="Nature">
        <title>Genome sequence of the human malaria parasite Plasmodium falciparum.</title>
        <authorList>
            <person name="Gardner M.J."/>
            <person name="Hall N."/>
            <person name="Fung E."/>
            <person name="White O."/>
            <person name="Berriman M."/>
            <person name="Hyman R.W."/>
            <person name="Carlton J.M."/>
            <person name="Pain A."/>
            <person name="Nelson K.E."/>
            <person name="Bowman S."/>
            <person name="Paulsen I.T."/>
            <person name="James K.D."/>
            <person name="Eisen J.A."/>
            <person name="Rutherford K.M."/>
            <person name="Salzberg S.L."/>
            <person name="Craig A."/>
            <person name="Kyes S."/>
            <person name="Chan M.-S."/>
            <person name="Nene V."/>
            <person name="Shallom S.J."/>
            <person name="Suh B."/>
            <person name="Peterson J."/>
            <person name="Angiuoli S."/>
            <person name="Pertea M."/>
            <person name="Allen J."/>
            <person name="Selengut J."/>
            <person name="Haft D."/>
            <person name="Mather M.W."/>
            <person name="Vaidya A.B."/>
            <person name="Martin D.M.A."/>
            <person name="Fairlamb A.H."/>
            <person name="Fraunholz M.J."/>
            <person name="Roos D.S."/>
            <person name="Ralph S.A."/>
            <person name="McFadden G.I."/>
            <person name="Cummings L.M."/>
            <person name="Subramanian G.M."/>
            <person name="Mungall C."/>
            <person name="Venter J.C."/>
            <person name="Carucci D.J."/>
            <person name="Hoffman S.L."/>
            <person name="Newbold C."/>
            <person name="Davis R.W."/>
            <person name="Fraser C.M."/>
            <person name="Barrell B.G."/>
        </authorList>
    </citation>
    <scope>NUCLEOTIDE SEQUENCE [LARGE SCALE GENOMIC DNA]</scope>
    <source>
        <strain>3D7</strain>
    </source>
</reference>
<reference evidence="8 12" key="3">
    <citation type="journal article" date="2014" name="Elife">
        <title>Cryo-EM structure of the Plasmodium falciparum 80S ribosome bound to the anti-protozoan drug emetine.</title>
        <authorList>
            <person name="Wong W."/>
            <person name="Bai X.C."/>
            <person name="Brown A."/>
            <person name="Fernandez I.S."/>
            <person name="Hanssen E."/>
            <person name="Condron M."/>
            <person name="Tan Y.H."/>
            <person name="Baum J."/>
            <person name="Scheres S.H."/>
        </authorList>
    </citation>
    <scope>STRUCTURE BY ELECTRON MICROSCOPY (3.20 ANGSTROMS) IN COMPLEX WITH RIBOSOMAL PROTEINS; RRNA; TRNA AND EMETINE INHIBITOR</scope>
    <scope>FUNCTION</scope>
    <scope>SUBCELLULAR LOCATION</scope>
    <scope>DEVELOPMENTAL STAGE</scope>
</reference>
<reference evidence="9 10 11" key="4">
    <citation type="journal article" date="2015" name="Nucleic Acids Res.">
        <title>Dynamical features of the Plasmodium falciparum ribosome during translation.</title>
        <authorList>
            <person name="Sun M."/>
            <person name="Li W."/>
            <person name="Blomqvist K."/>
            <person name="Das S."/>
            <person name="Hashem Y."/>
            <person name="Dvorin J.D."/>
            <person name="Frank J."/>
        </authorList>
    </citation>
    <scope>STRUCTURE BY ELECTRON MICROSCOPY (4.70 ANGSTROMS) OF 6-48 IN COMPLEX WITH RIBOSOMAL PROTEINS; RRNA AND TRNA</scope>
    <scope>FUNCTION</scope>
    <scope>DEVELOPMENTAL STAGE</scope>
</reference>
<gene>
    <name evidence="5" type="primary">RPS30</name>
    <name evidence="4" type="synonym">eS30</name>
    <name type="ORF">PF3D7_0219200</name>
    <name type="ORF">PFB0885w</name>
</gene>
<comment type="function">
    <text evidence="6 7">Component of the ribosome, a large ribonucleoprotein complex responsible for the synthesis of proteins in the cell (Probable). The small ribosomal subunit (SSU) binds messenger RNAs (mRNAs) and translates the encoded message by selecting cognate aminoacyl-transfer RNA (tRNA) molecules (Probable). The large subunit (LSU) contains the ribosomal catalytic site termed the peptidyl transferase center (PTC), which catalyzes the formation of peptide bonds, thereby polymerizing the amino acids delivered by tRNAs into a polypeptide chain (Probable). The nascent polypeptides leave the ribosome through a tunnel in the LSU and interact with protein factors that function in enzymatic processing, targeting, and the membrane insertion of nascent chains at the exit of the ribosomal tunnel (Probable).</text>
</comment>
<comment type="subunit">
    <text evidence="2 3">Component of the small ribosomal subunit (PubMed:24913268, PubMed:26432834). Mature ribosomes consist of a small (40S) and a large (60S) subunit (PubMed:24913268, PubMed:26432834). The 40S subunit contains about 32 different proteins and 1 molecule of RNA (18S). The 60S subunit contains about 42 different proteins and 3 molecules of RNA (28S, 5.8S and 5S) (PubMed:24913268, PubMed:26432834).</text>
</comment>
<comment type="subcellular location">
    <subcellularLocation>
        <location evidence="2">Cytoplasm</location>
    </subcellularLocation>
</comment>
<comment type="developmental stage">
    <text evidence="2 3">Expressed during the asexual blood stage (at protein level).</text>
</comment>
<comment type="similarity">
    <text evidence="5">Belongs to the eukaryotic ribosomal protein eS30 family.</text>
</comment>
<organism>
    <name type="scientific">Plasmodium falciparum (isolate 3D7)</name>
    <dbReference type="NCBI Taxonomy" id="36329"/>
    <lineage>
        <taxon>Eukaryota</taxon>
        <taxon>Sar</taxon>
        <taxon>Alveolata</taxon>
        <taxon>Apicomplexa</taxon>
        <taxon>Aconoidasida</taxon>
        <taxon>Haemosporida</taxon>
        <taxon>Plasmodiidae</taxon>
        <taxon>Plasmodium</taxon>
        <taxon>Plasmodium (Laverania)</taxon>
    </lineage>
</organism>
<sequence>MGKVHGSLARAGKVKNQTPKVPKLDKKKRLTGRAKKRQLYNRRFSDNGGRKKGPNSKA</sequence>
<evidence type="ECO:0000256" key="1">
    <source>
        <dbReference type="SAM" id="MobiDB-lite"/>
    </source>
</evidence>
<evidence type="ECO:0000269" key="2">
    <source>
    </source>
</evidence>
<evidence type="ECO:0000269" key="3">
    <source>
    </source>
</evidence>
<evidence type="ECO:0000303" key="4">
    <source>
    </source>
</evidence>
<evidence type="ECO:0000305" key="5"/>
<evidence type="ECO:0000305" key="6">
    <source>
    </source>
</evidence>
<evidence type="ECO:0000305" key="7">
    <source>
    </source>
</evidence>
<evidence type="ECO:0007744" key="8">
    <source>
        <dbReference type="PDB" id="3J7A"/>
    </source>
</evidence>
<evidence type="ECO:0007744" key="9">
    <source>
        <dbReference type="PDB" id="3JBN"/>
    </source>
</evidence>
<evidence type="ECO:0007744" key="10">
    <source>
        <dbReference type="PDB" id="3JBO"/>
    </source>
</evidence>
<evidence type="ECO:0007744" key="11">
    <source>
        <dbReference type="PDB" id="3JBP"/>
    </source>
</evidence>
<evidence type="ECO:0007744" key="12">
    <source>
        <dbReference type="PDB" id="6OKK"/>
    </source>
</evidence>
<evidence type="ECO:0007829" key="13">
    <source>
        <dbReference type="PDB" id="3J7A"/>
    </source>
</evidence>
<accession>O96269</accession>
<accession>A0A144A0U2</accession>
<dbReference type="EMBL" id="LN999943">
    <property type="protein sequence ID" value="CZT98203.1"/>
    <property type="molecule type" value="Genomic_DNA"/>
</dbReference>
<dbReference type="PIR" id="A71604">
    <property type="entry name" value="A71604"/>
</dbReference>
<dbReference type="RefSeq" id="XP_001349693.1">
    <property type="nucleotide sequence ID" value="XM_001349657.1"/>
</dbReference>
<dbReference type="PDB" id="3J7A">
    <property type="method" value="EM"/>
    <property type="resolution" value="3.20 A"/>
    <property type="chains" value="6=1-58"/>
</dbReference>
<dbReference type="PDB" id="3JBN">
    <property type="method" value="EM"/>
    <property type="resolution" value="4.70 A"/>
    <property type="chains" value="6=6-48"/>
</dbReference>
<dbReference type="PDB" id="3JBO">
    <property type="method" value="EM"/>
    <property type="resolution" value="5.80 A"/>
    <property type="chains" value="6=6-48"/>
</dbReference>
<dbReference type="PDB" id="3JBP">
    <property type="method" value="EM"/>
    <property type="resolution" value="6.70 A"/>
    <property type="chains" value="6=6-48"/>
</dbReference>
<dbReference type="PDB" id="6OKK">
    <property type="method" value="EM"/>
    <property type="resolution" value="3.30 A"/>
    <property type="chains" value="f=1-58"/>
</dbReference>
<dbReference type="PDB" id="8TPU">
    <property type="method" value="EM"/>
    <property type="resolution" value="4.10 A"/>
    <property type="chains" value="S6=6-48"/>
</dbReference>
<dbReference type="PDBsum" id="3J7A"/>
<dbReference type="PDBsum" id="3JBN"/>
<dbReference type="PDBsum" id="3JBO"/>
<dbReference type="PDBsum" id="3JBP"/>
<dbReference type="PDBsum" id="6OKK"/>
<dbReference type="PDBsum" id="8TPU"/>
<dbReference type="EMDB" id="EMD-41485"/>
<dbReference type="SMR" id="O96269"/>
<dbReference type="FunCoup" id="O96269">
    <property type="interactions" value="92"/>
</dbReference>
<dbReference type="IntAct" id="O96269">
    <property type="interactions" value="1"/>
</dbReference>
<dbReference type="STRING" id="36329.O96269"/>
<dbReference type="PaxDb" id="5833-PFB0885w"/>
<dbReference type="EnsemblProtists" id="CZT98203">
    <property type="protein sequence ID" value="CZT98203"/>
    <property type="gene ID" value="PF3D7_0219200"/>
</dbReference>
<dbReference type="GeneID" id="812775"/>
<dbReference type="KEGG" id="pfa:PF3D7_0219200"/>
<dbReference type="VEuPathDB" id="PlasmoDB:PF3D7_0219200"/>
<dbReference type="HOGENOM" id="CLU_010412_5_1_1"/>
<dbReference type="OMA" id="KRRILVW"/>
<dbReference type="OrthoDB" id="3446at2759"/>
<dbReference type="PhylomeDB" id="O96269"/>
<dbReference type="EvolutionaryTrace" id="O96269"/>
<dbReference type="Proteomes" id="UP000001450">
    <property type="component" value="Chromosome 2"/>
</dbReference>
<dbReference type="GO" id="GO:0022627">
    <property type="term" value="C:cytosolic small ribosomal subunit"/>
    <property type="evidence" value="ECO:0000314"/>
    <property type="project" value="GeneDB"/>
</dbReference>
<dbReference type="GO" id="GO:0003735">
    <property type="term" value="F:structural constituent of ribosome"/>
    <property type="evidence" value="ECO:0000314"/>
    <property type="project" value="GeneDB"/>
</dbReference>
<dbReference type="GO" id="GO:0006412">
    <property type="term" value="P:translation"/>
    <property type="evidence" value="ECO:0000250"/>
    <property type="project" value="GeneDB"/>
</dbReference>
<dbReference type="InterPro" id="IPR006846">
    <property type="entry name" value="Ribosomal_eS30"/>
</dbReference>
<dbReference type="PANTHER" id="PTHR12650">
    <property type="entry name" value="40S RIBOSOMAL PROTEIN S30/UBIQUITIN-LIKE PROTEIN FUBI"/>
    <property type="match status" value="1"/>
</dbReference>
<dbReference type="PANTHER" id="PTHR12650:SF15">
    <property type="entry name" value="RIBOSOMAL PROTEIN S30, ISOFORM A"/>
    <property type="match status" value="1"/>
</dbReference>
<dbReference type="Pfam" id="PF04758">
    <property type="entry name" value="Ribosomal_S30"/>
    <property type="match status" value="1"/>
</dbReference>
<protein>
    <recommendedName>
        <fullName evidence="5">Small ribosomal subunit protein eS30</fullName>
    </recommendedName>
    <alternativeName>
        <fullName>40S ribosomal protein S30</fullName>
    </alternativeName>
</protein>
<keyword id="KW-0002">3D-structure</keyword>
<keyword id="KW-0963">Cytoplasm</keyword>
<keyword id="KW-1185">Reference proteome</keyword>
<keyword id="KW-0687">Ribonucleoprotein</keyword>
<keyword id="KW-0689">Ribosomal protein</keyword>
<name>RS30_PLAF7</name>